<protein>
    <recommendedName>
        <fullName>Phosphocarrier protein HPr</fullName>
    </recommendedName>
    <alternativeName>
        <fullName>Histidine-containing protein</fullName>
    </alternativeName>
</protein>
<feature type="chain" id="PRO_0000107856" description="Phosphocarrier protein HPr">
    <location>
        <begin position="1"/>
        <end position="88"/>
    </location>
</feature>
<feature type="domain" description="HPr" evidence="2">
    <location>
        <begin position="1"/>
        <end position="88"/>
    </location>
</feature>
<feature type="active site" description="Pros-phosphohistidine intermediate" evidence="2">
    <location>
        <position position="15"/>
    </location>
</feature>
<feature type="modified residue" description="Phosphoserine; by HPrK/P" evidence="4">
    <location>
        <position position="46"/>
    </location>
</feature>
<organism>
    <name type="scientific">Lacticaseibacillus casei</name>
    <name type="common">Lactobacillus casei</name>
    <dbReference type="NCBI Taxonomy" id="1582"/>
    <lineage>
        <taxon>Bacteria</taxon>
        <taxon>Bacillati</taxon>
        <taxon>Bacillota</taxon>
        <taxon>Bacilli</taxon>
        <taxon>Lactobacillales</taxon>
        <taxon>Lactobacillaceae</taxon>
        <taxon>Lacticaseibacillus</taxon>
    </lineage>
</organism>
<dbReference type="EMBL" id="AF159589">
    <property type="protein sequence ID" value="AAF74346.1"/>
    <property type="molecule type" value="Genomic_DNA"/>
</dbReference>
<dbReference type="RefSeq" id="WP_003566007.1">
    <property type="nucleotide sequence ID" value="NZ_WBOC01000006.1"/>
</dbReference>
<dbReference type="SMR" id="Q9KJV3"/>
<dbReference type="STRING" id="1582.AAW28_12415"/>
<dbReference type="iPTMnet" id="Q9KJV3"/>
<dbReference type="eggNOG" id="COG1925">
    <property type="taxonomic scope" value="Bacteria"/>
</dbReference>
<dbReference type="OMA" id="AEVWVTR"/>
<dbReference type="OrthoDB" id="9809047at2"/>
<dbReference type="GO" id="GO:0005737">
    <property type="term" value="C:cytoplasm"/>
    <property type="evidence" value="ECO:0007669"/>
    <property type="project" value="UniProtKB-SubCell"/>
</dbReference>
<dbReference type="GO" id="GO:0009401">
    <property type="term" value="P:phosphoenolpyruvate-dependent sugar phosphotransferase system"/>
    <property type="evidence" value="ECO:0007669"/>
    <property type="project" value="UniProtKB-KW"/>
</dbReference>
<dbReference type="CDD" id="cd00367">
    <property type="entry name" value="PTS-HPr_like"/>
    <property type="match status" value="1"/>
</dbReference>
<dbReference type="Gene3D" id="3.30.1340.10">
    <property type="entry name" value="HPr-like"/>
    <property type="match status" value="1"/>
</dbReference>
<dbReference type="InterPro" id="IPR050399">
    <property type="entry name" value="HPr"/>
</dbReference>
<dbReference type="InterPro" id="IPR000032">
    <property type="entry name" value="HPr-like"/>
</dbReference>
<dbReference type="InterPro" id="IPR035895">
    <property type="entry name" value="HPr-like_sf"/>
</dbReference>
<dbReference type="InterPro" id="IPR001020">
    <property type="entry name" value="PTS_HPr_His_P_site"/>
</dbReference>
<dbReference type="InterPro" id="IPR002114">
    <property type="entry name" value="PTS_HPr_Ser_P_site"/>
</dbReference>
<dbReference type="NCBIfam" id="NF010352">
    <property type="entry name" value="PRK13780.1"/>
    <property type="match status" value="1"/>
</dbReference>
<dbReference type="NCBIfam" id="TIGR01003">
    <property type="entry name" value="PTS_HPr_family"/>
    <property type="match status" value="1"/>
</dbReference>
<dbReference type="PANTHER" id="PTHR33705">
    <property type="entry name" value="PHOSPHOCARRIER PROTEIN HPR"/>
    <property type="match status" value="1"/>
</dbReference>
<dbReference type="PANTHER" id="PTHR33705:SF2">
    <property type="entry name" value="PHOSPHOCARRIER PROTEIN NPR"/>
    <property type="match status" value="1"/>
</dbReference>
<dbReference type="Pfam" id="PF00381">
    <property type="entry name" value="PTS-HPr"/>
    <property type="match status" value="1"/>
</dbReference>
<dbReference type="PRINTS" id="PR00107">
    <property type="entry name" value="PHOSPHOCPHPR"/>
</dbReference>
<dbReference type="SUPFAM" id="SSF55594">
    <property type="entry name" value="HPr-like"/>
    <property type="match status" value="1"/>
</dbReference>
<dbReference type="PROSITE" id="PS51350">
    <property type="entry name" value="PTS_HPR_DOM"/>
    <property type="match status" value="1"/>
</dbReference>
<dbReference type="PROSITE" id="PS00369">
    <property type="entry name" value="PTS_HPR_HIS"/>
    <property type="match status" value="1"/>
</dbReference>
<dbReference type="PROSITE" id="PS00589">
    <property type="entry name" value="PTS_HPR_SER"/>
    <property type="match status" value="1"/>
</dbReference>
<sequence length="88" mass="9254">MEKREFNIIAETGIHARPATLLVQAASKFNSDINLEYKGKSVNLKSIMGVMSLGVGQGADVTISAEGADEADAIAAITDTMKKEGLAE</sequence>
<evidence type="ECO:0000250" key="1"/>
<evidence type="ECO:0000255" key="2">
    <source>
        <dbReference type="PROSITE-ProRule" id="PRU00681"/>
    </source>
</evidence>
<evidence type="ECO:0000305" key="3"/>
<evidence type="ECO:0000305" key="4">
    <source>
    </source>
</evidence>
<name>PTHP_LACCA</name>
<comment type="function">
    <text evidence="1">General (non sugar-specific) component of the phosphoenolpyruvate-dependent sugar phosphotransferase system (sugar PTS). This major carbohydrate active-transport system catalyzes the phosphorylation of incoming sugar substrates concomitantly with their translocation across the cell membrane. The phosphoryl group from phosphoenolpyruvate (PEP) is transferred to the phosphoryl carrier protein HPr by enzyme I. Phospho-HPr then transfers it to the PTS EIIA domain.</text>
</comment>
<comment type="function">
    <text evidence="1">P-Ser-HPr interacts with the catabolite control protein A (CcpA), forming a complex that binds to DNA at the catabolite response elements cre, operator sites preceding a large number of catabolite-regulated genes. Thus, P-Ser-HPr is a corepressor in carbon catabolite repression (CCR), a mechanism that allows bacteria to coordinate and optimize the utilization of available carbon sources. P-Ser-HPr also plays a role in inducer exclusion, in which it probably interacts with several non-PTS permeases and inhibits their transport activity (By similarity).</text>
</comment>
<comment type="activity regulation">
    <text evidence="1">Phosphorylation on Ser-46 inhibits the phosphoryl transfer from enzyme I to HPr.</text>
</comment>
<comment type="subcellular location">
    <subcellularLocation>
        <location evidence="1">Cytoplasm</location>
    </subcellularLocation>
</comment>
<comment type="similarity">
    <text evidence="3">Belongs to the HPr family.</text>
</comment>
<keyword id="KW-0963">Cytoplasm</keyword>
<keyword id="KW-0597">Phosphoprotein</keyword>
<keyword id="KW-0598">Phosphotransferase system</keyword>
<keyword id="KW-0762">Sugar transport</keyword>
<keyword id="KW-0804">Transcription</keyword>
<keyword id="KW-0805">Transcription regulation</keyword>
<keyword id="KW-0813">Transport</keyword>
<proteinExistence type="evidence at protein level"/>
<accession>Q9KJV3</accession>
<reference key="1">
    <citation type="journal article" date="2000" name="Mol. Microbiol.">
        <title>Enzyme I and HPr from Lactobacillus casei: their role in sugar transport, carbon catabolite repression and inducer exclusion.</title>
        <authorList>
            <person name="Viana R."/>
            <person name="Monedero V."/>
            <person name="Dossonnet V."/>
            <person name="Vadeboncoeur C."/>
            <person name="Perez-Martinez G."/>
            <person name="Deutscher J."/>
        </authorList>
    </citation>
    <scope>NUCLEOTIDE SEQUENCE [GENOMIC DNA]</scope>
    <source>
        <strain>ATCC 393 / DSM 20011 / JCM 1134 / BCRC 10697 / CCUG 21451 / NBRC 15883 / NCIMB 11970 / NCDO 161 / WDCM 00100</strain>
    </source>
</reference>
<reference key="2">
    <citation type="journal article" date="2000" name="J. Bacteriol.">
        <title>Phosphorylation of HPr by the bifunctional HPr kinase/P-Ser-HPr phosphatase from Lactobacillus casei controls catabolite repression and inducer exclusion but not inducer expulsion.</title>
        <authorList>
            <person name="Dossonnet V."/>
            <person name="Monedero V."/>
            <person name="Zagorec M."/>
            <person name="Galinier A."/>
            <person name="Perez-Martinez G."/>
            <person name="Deutscher J."/>
        </authorList>
    </citation>
    <scope>PHOSPHORYLATION AT SER-46</scope>
    <source>
        <strain>ATCC 393 / DSM 20011 / JCM 1134 / BCRC 10697 / CCUG 21451 / NBRC 15883 / NCIMB 11970 / NCDO 161 / WDCM 00100</strain>
    </source>
</reference>
<gene>
    <name type="primary">ptsH</name>
</gene>